<gene>
    <name evidence="1" type="primary">rpsK</name>
    <name type="ordered locus">BPP0055</name>
</gene>
<feature type="chain" id="PRO_0000123115" description="Small ribosomal subunit protein uS11">
    <location>
        <begin position="1"/>
        <end position="133"/>
    </location>
</feature>
<reference key="1">
    <citation type="journal article" date="2003" name="Nat. Genet.">
        <title>Comparative analysis of the genome sequences of Bordetella pertussis, Bordetella parapertussis and Bordetella bronchiseptica.</title>
        <authorList>
            <person name="Parkhill J."/>
            <person name="Sebaihia M."/>
            <person name="Preston A."/>
            <person name="Murphy L.D."/>
            <person name="Thomson N.R."/>
            <person name="Harris D.E."/>
            <person name="Holden M.T.G."/>
            <person name="Churcher C.M."/>
            <person name="Bentley S.D."/>
            <person name="Mungall K.L."/>
            <person name="Cerdeno-Tarraga A.-M."/>
            <person name="Temple L."/>
            <person name="James K.D."/>
            <person name="Harris B."/>
            <person name="Quail M.A."/>
            <person name="Achtman M."/>
            <person name="Atkin R."/>
            <person name="Baker S."/>
            <person name="Basham D."/>
            <person name="Bason N."/>
            <person name="Cherevach I."/>
            <person name="Chillingworth T."/>
            <person name="Collins M."/>
            <person name="Cronin A."/>
            <person name="Davis P."/>
            <person name="Doggett J."/>
            <person name="Feltwell T."/>
            <person name="Goble A."/>
            <person name="Hamlin N."/>
            <person name="Hauser H."/>
            <person name="Holroyd S."/>
            <person name="Jagels K."/>
            <person name="Leather S."/>
            <person name="Moule S."/>
            <person name="Norberczak H."/>
            <person name="O'Neil S."/>
            <person name="Ormond D."/>
            <person name="Price C."/>
            <person name="Rabbinowitsch E."/>
            <person name="Rutter S."/>
            <person name="Sanders M."/>
            <person name="Saunders D."/>
            <person name="Seeger K."/>
            <person name="Sharp S."/>
            <person name="Simmonds M."/>
            <person name="Skelton J."/>
            <person name="Squares R."/>
            <person name="Squares S."/>
            <person name="Stevens K."/>
            <person name="Unwin L."/>
            <person name="Whitehead S."/>
            <person name="Barrell B.G."/>
            <person name="Maskell D.J."/>
        </authorList>
    </citation>
    <scope>NUCLEOTIDE SEQUENCE [LARGE SCALE GENOMIC DNA]</scope>
    <source>
        <strain>12822 / ATCC BAA-587 / NCTC 13253</strain>
    </source>
</reference>
<name>RS11_BORPA</name>
<proteinExistence type="inferred from homology"/>
<organism>
    <name type="scientific">Bordetella parapertussis (strain 12822 / ATCC BAA-587 / NCTC 13253)</name>
    <dbReference type="NCBI Taxonomy" id="257311"/>
    <lineage>
        <taxon>Bacteria</taxon>
        <taxon>Pseudomonadati</taxon>
        <taxon>Pseudomonadota</taxon>
        <taxon>Betaproteobacteria</taxon>
        <taxon>Burkholderiales</taxon>
        <taxon>Alcaligenaceae</taxon>
        <taxon>Bordetella</taxon>
    </lineage>
</organism>
<protein>
    <recommendedName>
        <fullName evidence="1">Small ribosomal subunit protein uS11</fullName>
    </recommendedName>
    <alternativeName>
        <fullName evidence="2">30S ribosomal protein S11</fullName>
    </alternativeName>
</protein>
<keyword id="KW-0687">Ribonucleoprotein</keyword>
<keyword id="KW-0689">Ribosomal protein</keyword>
<keyword id="KW-0694">RNA-binding</keyword>
<keyword id="KW-0699">rRNA-binding</keyword>
<sequence>MAKASTSGASRVRKKVKKNVSDGIAHVHASFNNTIITITDRQGNALSWATSGGAGFKGSRKSTPFAAQVAAETAGRVAMEYGIKTLEVRIKGPGPGRESSVRALNALGIKISSIADITPVPHNGCRPPKRRRI</sequence>
<comment type="function">
    <text evidence="1">Located on the platform of the 30S subunit, it bridges several disparate RNA helices of the 16S rRNA. Forms part of the Shine-Dalgarno cleft in the 70S ribosome.</text>
</comment>
<comment type="subunit">
    <text evidence="1">Part of the 30S ribosomal subunit. Interacts with proteins S7 and S18. Binds to IF-3.</text>
</comment>
<comment type="similarity">
    <text evidence="1">Belongs to the universal ribosomal protein uS11 family.</text>
</comment>
<accession>Q7W2D1</accession>
<evidence type="ECO:0000255" key="1">
    <source>
        <dbReference type="HAMAP-Rule" id="MF_01310"/>
    </source>
</evidence>
<evidence type="ECO:0000305" key="2"/>
<dbReference type="EMBL" id="BX640423">
    <property type="protein sequence ID" value="CAE39796.1"/>
    <property type="molecule type" value="Genomic_DNA"/>
</dbReference>
<dbReference type="RefSeq" id="WP_003806930.1">
    <property type="nucleotide sequence ID" value="NC_002928.3"/>
</dbReference>
<dbReference type="SMR" id="Q7W2D1"/>
<dbReference type="GeneID" id="93206285"/>
<dbReference type="KEGG" id="bpa:BPP0055"/>
<dbReference type="HOGENOM" id="CLU_072439_5_0_4"/>
<dbReference type="Proteomes" id="UP000001421">
    <property type="component" value="Chromosome"/>
</dbReference>
<dbReference type="GO" id="GO:1990904">
    <property type="term" value="C:ribonucleoprotein complex"/>
    <property type="evidence" value="ECO:0007669"/>
    <property type="project" value="UniProtKB-KW"/>
</dbReference>
<dbReference type="GO" id="GO:0005840">
    <property type="term" value="C:ribosome"/>
    <property type="evidence" value="ECO:0007669"/>
    <property type="project" value="UniProtKB-KW"/>
</dbReference>
<dbReference type="GO" id="GO:0019843">
    <property type="term" value="F:rRNA binding"/>
    <property type="evidence" value="ECO:0007669"/>
    <property type="project" value="UniProtKB-UniRule"/>
</dbReference>
<dbReference type="GO" id="GO:0003735">
    <property type="term" value="F:structural constituent of ribosome"/>
    <property type="evidence" value="ECO:0007669"/>
    <property type="project" value="InterPro"/>
</dbReference>
<dbReference type="GO" id="GO:0006412">
    <property type="term" value="P:translation"/>
    <property type="evidence" value="ECO:0007669"/>
    <property type="project" value="UniProtKB-UniRule"/>
</dbReference>
<dbReference type="FunFam" id="3.30.420.80:FF:000001">
    <property type="entry name" value="30S ribosomal protein S11"/>
    <property type="match status" value="1"/>
</dbReference>
<dbReference type="Gene3D" id="3.30.420.80">
    <property type="entry name" value="Ribosomal protein S11"/>
    <property type="match status" value="1"/>
</dbReference>
<dbReference type="HAMAP" id="MF_01310">
    <property type="entry name" value="Ribosomal_uS11"/>
    <property type="match status" value="1"/>
</dbReference>
<dbReference type="InterPro" id="IPR001971">
    <property type="entry name" value="Ribosomal_uS11"/>
</dbReference>
<dbReference type="InterPro" id="IPR019981">
    <property type="entry name" value="Ribosomal_uS11_bac-type"/>
</dbReference>
<dbReference type="InterPro" id="IPR018102">
    <property type="entry name" value="Ribosomal_uS11_CS"/>
</dbReference>
<dbReference type="InterPro" id="IPR036967">
    <property type="entry name" value="Ribosomal_uS11_sf"/>
</dbReference>
<dbReference type="NCBIfam" id="NF003698">
    <property type="entry name" value="PRK05309.1"/>
    <property type="match status" value="1"/>
</dbReference>
<dbReference type="NCBIfam" id="TIGR03632">
    <property type="entry name" value="uS11_bact"/>
    <property type="match status" value="1"/>
</dbReference>
<dbReference type="PANTHER" id="PTHR11759">
    <property type="entry name" value="40S RIBOSOMAL PROTEIN S14/30S RIBOSOMAL PROTEIN S11"/>
    <property type="match status" value="1"/>
</dbReference>
<dbReference type="Pfam" id="PF00411">
    <property type="entry name" value="Ribosomal_S11"/>
    <property type="match status" value="1"/>
</dbReference>
<dbReference type="PIRSF" id="PIRSF002131">
    <property type="entry name" value="Ribosomal_S11"/>
    <property type="match status" value="1"/>
</dbReference>
<dbReference type="SUPFAM" id="SSF53137">
    <property type="entry name" value="Translational machinery components"/>
    <property type="match status" value="1"/>
</dbReference>
<dbReference type="PROSITE" id="PS00054">
    <property type="entry name" value="RIBOSOMAL_S11"/>
    <property type="match status" value="1"/>
</dbReference>